<reference key="1">
    <citation type="journal article" date="1992" name="Biochemistry">
        <title>Primary structure of rat liver D-beta-hydroxybutyrate dehydrogenase from cDNA and protein analyses: a short-chain alcohol dehydrogenase.</title>
        <authorList>
            <person name="Churchill P."/>
            <person name="Hempel J."/>
            <person name="Romovacek H."/>
            <person name="Zhang W.W."/>
            <person name="Churchill S."/>
            <person name="Brennan M."/>
        </authorList>
    </citation>
    <scope>NUCLEOTIDE SEQUENCE [MRNA]</scope>
    <scope>PARTIAL PROTEIN SEQUENCE</scope>
    <scope>CATALYTIC ACTIVITY</scope>
    <scope>TISSUE SPECIFICITY</scope>
    <source>
        <strain>Sprague-Dawley</strain>
        <tissue>Liver</tissue>
    </source>
</reference>
<reference key="2">
    <citation type="journal article" date="2004" name="Genome Res.">
        <title>The status, quality, and expansion of the NIH full-length cDNA project: the Mammalian Gene Collection (MGC).</title>
        <authorList>
            <consortium name="The MGC Project Team"/>
        </authorList>
    </citation>
    <scope>NUCLEOTIDE SEQUENCE [LARGE SCALE MRNA]</scope>
    <source>
        <tissue>Kidney</tissue>
    </source>
</reference>
<reference key="3">
    <citation type="journal article" date="1993" name="J. Histochem. Cytochem.">
        <title>Effects of digitonin on the intracellular content of rat hepatocytes: implications for its use in the study of intralobular heterogeneity.</title>
        <authorList>
            <person name="Racine L."/>
            <person name="Scoazec J.Y."/>
            <person name="Moreau A."/>
            <person name="Bernuau D."/>
            <person name="Feldmann G."/>
        </authorList>
    </citation>
    <scope>SUBCELLULAR LOCATION</scope>
</reference>
<reference key="4">
    <citation type="journal article" date="2012" name="Nat. Commun.">
        <title>Quantitative maps of protein phosphorylation sites across 14 different rat organs and tissues.</title>
        <authorList>
            <person name="Lundby A."/>
            <person name="Secher A."/>
            <person name="Lage K."/>
            <person name="Nordsborg N.B."/>
            <person name="Dmytriyev A."/>
            <person name="Lundby C."/>
            <person name="Olsen J.V."/>
        </authorList>
    </citation>
    <scope>PHOSPHORYLATION [LARGE SCALE ANALYSIS] AT SER-246</scope>
    <scope>IDENTIFICATION BY MASS SPECTROMETRY [LARGE SCALE ANALYSIS]</scope>
</reference>
<reference key="5">
    <citation type="journal article" date="2013" name="PLoS ONE">
        <title>Discovery and confirmation of O-GlcNAcylated proteins in rat liver mitochondria by combination of mass spectrometry and immunological methods.</title>
        <authorList>
            <person name="Cao W."/>
            <person name="Cao J."/>
            <person name="Huang J."/>
            <person name="Yao J."/>
            <person name="Yan G."/>
            <person name="Xu H."/>
            <person name="Yang P."/>
        </authorList>
    </citation>
    <scope>GLYCOSYLATION AT SER-219</scope>
</reference>
<feature type="transit peptide" description="Mitochondrion">
    <location>
        <begin position="1"/>
        <end position="46"/>
    </location>
</feature>
<feature type="chain" id="PRO_0000031962" description="D-beta-hydroxybutyrate dehydrogenase, mitochondrial">
    <location>
        <begin position="47"/>
        <end position="343"/>
    </location>
</feature>
<feature type="active site" description="Proton acceptor" evidence="4">
    <location>
        <position position="208"/>
    </location>
</feature>
<feature type="binding site" evidence="1">
    <location>
        <begin position="59"/>
        <end position="83"/>
    </location>
    <ligand>
        <name>NAD(+)</name>
        <dbReference type="ChEBI" id="CHEBI:57540"/>
    </ligand>
</feature>
<feature type="binding site" evidence="1">
    <location>
        <position position="195"/>
    </location>
    <ligand>
        <name>substrate</name>
    </ligand>
</feature>
<feature type="modified residue" description="N6-acetyllysine" evidence="3">
    <location>
        <position position="73"/>
    </location>
</feature>
<feature type="modified residue" description="N6-acetyllysine; alternate" evidence="3">
    <location>
        <position position="103"/>
    </location>
</feature>
<feature type="modified residue" description="N6-succinyllysine; alternate" evidence="3">
    <location>
        <position position="103"/>
    </location>
</feature>
<feature type="modified residue" description="N6-acetyllysine" evidence="3">
    <location>
        <position position="132"/>
    </location>
</feature>
<feature type="modified residue" description="N6-acetyllysine" evidence="3">
    <location>
        <position position="177"/>
    </location>
</feature>
<feature type="modified residue" description="N6-acetyllysine" evidence="3">
    <location>
        <position position="212"/>
    </location>
</feature>
<feature type="modified residue" description="Phosphoserine" evidence="11">
    <location>
        <position position="246"/>
    </location>
</feature>
<feature type="modified residue" description="N6-acetyllysine" evidence="3">
    <location>
        <position position="258"/>
    </location>
</feature>
<feature type="modified residue" description="N6-acetyllysine; alternate" evidence="3">
    <location>
        <position position="259"/>
    </location>
</feature>
<feature type="modified residue" description="N6-succinyllysine; alternate" evidence="3">
    <location>
        <position position="259"/>
    </location>
</feature>
<feature type="modified residue" description="N6-acetyllysine" evidence="3">
    <location>
        <position position="280"/>
    </location>
</feature>
<feature type="glycosylation site" description="O-linked (GlcNAc) serine" evidence="6">
    <location>
        <position position="219"/>
    </location>
</feature>
<feature type="sequence conflict" description="In Ref. 1; AAB59684." evidence="9" ref="1">
    <original>DK</original>
    <variation>EQ</variation>
    <location>
        <begin position="90"/>
        <end position="91"/>
    </location>
</feature>
<organism>
    <name type="scientific">Rattus norvegicus</name>
    <name type="common">Rat</name>
    <dbReference type="NCBI Taxonomy" id="10116"/>
    <lineage>
        <taxon>Eukaryota</taxon>
        <taxon>Metazoa</taxon>
        <taxon>Chordata</taxon>
        <taxon>Craniata</taxon>
        <taxon>Vertebrata</taxon>
        <taxon>Euteleostomi</taxon>
        <taxon>Mammalia</taxon>
        <taxon>Eutheria</taxon>
        <taxon>Euarchontoglires</taxon>
        <taxon>Glires</taxon>
        <taxon>Rodentia</taxon>
        <taxon>Myomorpha</taxon>
        <taxon>Muroidea</taxon>
        <taxon>Muridae</taxon>
        <taxon>Murinae</taxon>
        <taxon>Rattus</taxon>
    </lineage>
</organism>
<evidence type="ECO:0000250" key="1"/>
<evidence type="ECO:0000250" key="2">
    <source>
        <dbReference type="UniProtKB" id="Q02337"/>
    </source>
</evidence>
<evidence type="ECO:0000250" key="3">
    <source>
        <dbReference type="UniProtKB" id="Q80XN0"/>
    </source>
</evidence>
<evidence type="ECO:0000255" key="4">
    <source>
        <dbReference type="PROSITE-ProRule" id="PRU10001"/>
    </source>
</evidence>
<evidence type="ECO:0000269" key="5">
    <source>
    </source>
</evidence>
<evidence type="ECO:0000269" key="6">
    <source>
    </source>
</evidence>
<evidence type="ECO:0000269" key="7">
    <source>
    </source>
</evidence>
<evidence type="ECO:0000303" key="8">
    <source>
    </source>
</evidence>
<evidence type="ECO:0000305" key="9"/>
<evidence type="ECO:0000312" key="10">
    <source>
        <dbReference type="RGD" id="620131"/>
    </source>
</evidence>
<evidence type="ECO:0007744" key="11">
    <source>
    </source>
</evidence>
<accession>P29147</accession>
<accession>Q5U2Q2</accession>
<comment type="catalytic activity">
    <reaction evidence="5">
        <text>(R)-3-hydroxybutanoate + NAD(+) = acetoacetate + NADH + H(+)</text>
        <dbReference type="Rhea" id="RHEA:20521"/>
        <dbReference type="ChEBI" id="CHEBI:10983"/>
        <dbReference type="ChEBI" id="CHEBI:13705"/>
        <dbReference type="ChEBI" id="CHEBI:15378"/>
        <dbReference type="ChEBI" id="CHEBI:57540"/>
        <dbReference type="ChEBI" id="CHEBI:57945"/>
        <dbReference type="EC" id="1.1.1.30"/>
    </reaction>
</comment>
<comment type="activity regulation">
    <text evidence="2">Requires phosphatidylcholine as an allosteric activator for enzymatic activity.</text>
</comment>
<comment type="subunit">
    <text evidence="2">Homotetramer.</text>
</comment>
<comment type="subcellular location">
    <subcellularLocation>
        <location evidence="7">Mitochondrion inner membrane</location>
    </subcellularLocation>
    <subcellularLocation>
        <location evidence="2">Mitochondrion matrix</location>
    </subcellularLocation>
</comment>
<comment type="tissue specificity">
    <text evidence="5">Expressed in liver.</text>
</comment>
<comment type="similarity">
    <text evidence="9">Belongs to the short-chain dehydrogenases/reductases (SDR) family.</text>
</comment>
<comment type="sequence caution" evidence="9">
    <conflict type="erroneous initiation">
        <sequence resource="EMBL-CDS" id="AAB59684"/>
    </conflict>
</comment>
<comment type="sequence caution" evidence="9">
    <conflict type="erroneous initiation">
        <sequence resource="EMBL-CDS" id="AAH85916"/>
    </conflict>
</comment>
<protein>
    <recommendedName>
        <fullName evidence="9">D-beta-hydroxybutyrate dehydrogenase, mitochondrial</fullName>
        <ecNumber evidence="5">1.1.1.30</ecNumber>
    </recommendedName>
    <alternativeName>
        <fullName evidence="8">3-hydroxybutyrate dehydrogenase</fullName>
        <shortName evidence="8">BDH</shortName>
    </alternativeName>
</protein>
<dbReference type="EC" id="1.1.1.30" evidence="5"/>
<dbReference type="EMBL" id="M89902">
    <property type="protein sequence ID" value="AAB59684.1"/>
    <property type="status" value="ALT_INIT"/>
    <property type="molecule type" value="mRNA"/>
</dbReference>
<dbReference type="EMBL" id="BC085916">
    <property type="protein sequence ID" value="AAH85916.1"/>
    <property type="status" value="ALT_INIT"/>
    <property type="molecule type" value="mRNA"/>
</dbReference>
<dbReference type="PIR" id="A42345">
    <property type="entry name" value="A42345"/>
</dbReference>
<dbReference type="RefSeq" id="NP_446447.2">
    <property type="nucleotide sequence ID" value="NM_053995.3"/>
</dbReference>
<dbReference type="RefSeq" id="XP_006248540.1">
    <property type="nucleotide sequence ID" value="XM_006248478.3"/>
</dbReference>
<dbReference type="RefSeq" id="XP_008766913.1">
    <property type="nucleotide sequence ID" value="XM_008768691.2"/>
</dbReference>
<dbReference type="SMR" id="P29147"/>
<dbReference type="BioGRID" id="250672">
    <property type="interactions" value="2"/>
</dbReference>
<dbReference type="FunCoup" id="P29147">
    <property type="interactions" value="156"/>
</dbReference>
<dbReference type="IntAct" id="P29147">
    <property type="interactions" value="2"/>
</dbReference>
<dbReference type="MINT" id="P29147"/>
<dbReference type="STRING" id="10116.ENSRNOP00000002366"/>
<dbReference type="CarbonylDB" id="P29147"/>
<dbReference type="GlyCosmos" id="P29147">
    <property type="glycosylation" value="1 site, No reported glycans"/>
</dbReference>
<dbReference type="GlyGen" id="P29147">
    <property type="glycosylation" value="1 site, 1 O-linked glycan (1 site)"/>
</dbReference>
<dbReference type="iPTMnet" id="P29147"/>
<dbReference type="PhosphoSitePlus" id="P29147"/>
<dbReference type="jPOST" id="P29147"/>
<dbReference type="PaxDb" id="10116-ENSRNOP00000002366"/>
<dbReference type="GeneID" id="117099"/>
<dbReference type="KEGG" id="rno:117099"/>
<dbReference type="UCSC" id="RGD:620131">
    <property type="organism name" value="rat"/>
</dbReference>
<dbReference type="AGR" id="RGD:620131"/>
<dbReference type="CTD" id="622"/>
<dbReference type="RGD" id="620131">
    <property type="gene designation" value="Bdh1"/>
</dbReference>
<dbReference type="eggNOG" id="KOG1610">
    <property type="taxonomic scope" value="Eukaryota"/>
</dbReference>
<dbReference type="InParanoid" id="P29147"/>
<dbReference type="OMA" id="ITKMESY"/>
<dbReference type="OrthoDB" id="2102561at2759"/>
<dbReference type="PhylomeDB" id="P29147"/>
<dbReference type="TreeFam" id="TF325617"/>
<dbReference type="Reactome" id="R-RNO-77108">
    <property type="pathway name" value="Utilization of Ketone Bodies"/>
</dbReference>
<dbReference type="Reactome" id="R-RNO-77111">
    <property type="pathway name" value="Synthesis of Ketone Bodies"/>
</dbReference>
<dbReference type="Reactome" id="R-RNO-9837999">
    <property type="pathway name" value="Mitochondrial protein degradation"/>
</dbReference>
<dbReference type="SABIO-RK" id="P29147"/>
<dbReference type="PRO" id="PR:P29147"/>
<dbReference type="Proteomes" id="UP000002494">
    <property type="component" value="Unplaced"/>
</dbReference>
<dbReference type="GO" id="GO:0043231">
    <property type="term" value="C:intracellular membrane-bounded organelle"/>
    <property type="evidence" value="ECO:0000318"/>
    <property type="project" value="GO_Central"/>
</dbReference>
<dbReference type="GO" id="GO:0099617">
    <property type="term" value="C:matrix side of mitochondrial inner membrane"/>
    <property type="evidence" value="ECO:0000250"/>
    <property type="project" value="UniProtKB"/>
</dbReference>
<dbReference type="GO" id="GO:0005743">
    <property type="term" value="C:mitochondrial inner membrane"/>
    <property type="evidence" value="ECO:0000314"/>
    <property type="project" value="RGD"/>
</dbReference>
<dbReference type="GO" id="GO:0005759">
    <property type="term" value="C:mitochondrial matrix"/>
    <property type="evidence" value="ECO:0007669"/>
    <property type="project" value="UniProtKB-SubCell"/>
</dbReference>
<dbReference type="GO" id="GO:0003858">
    <property type="term" value="F:3-hydroxybutyrate dehydrogenase activity"/>
    <property type="evidence" value="ECO:0000314"/>
    <property type="project" value="RGD"/>
</dbReference>
<dbReference type="GO" id="GO:0005543">
    <property type="term" value="F:phospholipid binding"/>
    <property type="evidence" value="ECO:0000314"/>
    <property type="project" value="RGD"/>
</dbReference>
<dbReference type="GO" id="GO:0060612">
    <property type="term" value="P:adipose tissue development"/>
    <property type="evidence" value="ECO:0000270"/>
    <property type="project" value="RGD"/>
</dbReference>
<dbReference type="GO" id="GO:0001889">
    <property type="term" value="P:liver development"/>
    <property type="evidence" value="ECO:0000270"/>
    <property type="project" value="RGD"/>
</dbReference>
<dbReference type="GO" id="GO:0046686">
    <property type="term" value="P:response to cadmium ion"/>
    <property type="evidence" value="ECO:0000270"/>
    <property type="project" value="RGD"/>
</dbReference>
<dbReference type="GO" id="GO:0051412">
    <property type="term" value="P:response to corticosterone"/>
    <property type="evidence" value="ECO:0000270"/>
    <property type="project" value="RGD"/>
</dbReference>
<dbReference type="GO" id="GO:0032355">
    <property type="term" value="P:response to estradiol"/>
    <property type="evidence" value="ECO:0000270"/>
    <property type="project" value="RGD"/>
</dbReference>
<dbReference type="GO" id="GO:0045471">
    <property type="term" value="P:response to ethanol"/>
    <property type="evidence" value="ECO:0000270"/>
    <property type="project" value="RGD"/>
</dbReference>
<dbReference type="GO" id="GO:0060416">
    <property type="term" value="P:response to growth hormone"/>
    <property type="evidence" value="ECO:0000270"/>
    <property type="project" value="RGD"/>
</dbReference>
<dbReference type="GO" id="GO:0009725">
    <property type="term" value="P:response to hormone"/>
    <property type="evidence" value="ECO:0000270"/>
    <property type="project" value="RGD"/>
</dbReference>
<dbReference type="GO" id="GO:0032868">
    <property type="term" value="P:response to insulin"/>
    <property type="evidence" value="ECO:0000270"/>
    <property type="project" value="RGD"/>
</dbReference>
<dbReference type="GO" id="GO:0007584">
    <property type="term" value="P:response to nutrient"/>
    <property type="evidence" value="ECO:0000270"/>
    <property type="project" value="RGD"/>
</dbReference>
<dbReference type="GO" id="GO:0042594">
    <property type="term" value="P:response to starvation"/>
    <property type="evidence" value="ECO:0000270"/>
    <property type="project" value="RGD"/>
</dbReference>
<dbReference type="GO" id="GO:0009636">
    <property type="term" value="P:response to toxic substance"/>
    <property type="evidence" value="ECO:0000270"/>
    <property type="project" value="RGD"/>
</dbReference>
<dbReference type="GO" id="GO:0009410">
    <property type="term" value="P:response to xenobiotic stimulus"/>
    <property type="evidence" value="ECO:0000270"/>
    <property type="project" value="RGD"/>
</dbReference>
<dbReference type="GO" id="GO:0008202">
    <property type="term" value="P:steroid metabolic process"/>
    <property type="evidence" value="ECO:0000318"/>
    <property type="project" value="GO_Central"/>
</dbReference>
<dbReference type="CDD" id="cd09805">
    <property type="entry name" value="type2_17beta_HSD-like_SDR_c"/>
    <property type="match status" value="1"/>
</dbReference>
<dbReference type="FunFam" id="3.40.50.720:FF:000074">
    <property type="entry name" value="Retinol dehydrogenase type 1"/>
    <property type="match status" value="1"/>
</dbReference>
<dbReference type="Gene3D" id="3.40.50.720">
    <property type="entry name" value="NAD(P)-binding Rossmann-like Domain"/>
    <property type="match status" value="1"/>
</dbReference>
<dbReference type="InterPro" id="IPR036291">
    <property type="entry name" value="NAD(P)-bd_dom_sf"/>
</dbReference>
<dbReference type="InterPro" id="IPR020904">
    <property type="entry name" value="Sc_DH/Rdtase_CS"/>
</dbReference>
<dbReference type="InterPro" id="IPR002347">
    <property type="entry name" value="SDR_fam"/>
</dbReference>
<dbReference type="PANTHER" id="PTHR43313:SF25">
    <property type="entry name" value="D-BETA-HYDROXYBUTYRATE DEHYDROGENASE, MITOCHONDRIAL"/>
    <property type="match status" value="1"/>
</dbReference>
<dbReference type="PANTHER" id="PTHR43313">
    <property type="entry name" value="SHORT-CHAIN DEHYDROGENASE/REDUCTASE FAMILY 9C"/>
    <property type="match status" value="1"/>
</dbReference>
<dbReference type="Pfam" id="PF00106">
    <property type="entry name" value="adh_short"/>
    <property type="match status" value="1"/>
</dbReference>
<dbReference type="PRINTS" id="PR00081">
    <property type="entry name" value="GDHRDH"/>
</dbReference>
<dbReference type="PRINTS" id="PR00080">
    <property type="entry name" value="SDRFAMILY"/>
</dbReference>
<dbReference type="SUPFAM" id="SSF51735">
    <property type="entry name" value="NAD(P)-binding Rossmann-fold domains"/>
    <property type="match status" value="1"/>
</dbReference>
<dbReference type="PROSITE" id="PS00061">
    <property type="entry name" value="ADH_SHORT"/>
    <property type="match status" value="1"/>
</dbReference>
<proteinExistence type="evidence at protein level"/>
<keyword id="KW-0007">Acetylation</keyword>
<keyword id="KW-0021">Allosteric enzyme</keyword>
<keyword id="KW-0903">Direct protein sequencing</keyword>
<keyword id="KW-0325">Glycoprotein</keyword>
<keyword id="KW-0443">Lipid metabolism</keyword>
<keyword id="KW-0472">Membrane</keyword>
<keyword id="KW-0496">Mitochondrion</keyword>
<keyword id="KW-0999">Mitochondrion inner membrane</keyword>
<keyword id="KW-0520">NAD</keyword>
<keyword id="KW-0560">Oxidoreductase</keyword>
<keyword id="KW-0597">Phosphoprotein</keyword>
<keyword id="KW-1185">Reference proteome</keyword>
<keyword id="KW-0809">Transit peptide</keyword>
<gene>
    <name evidence="10" type="primary">Bdh1</name>
    <name evidence="8" type="synonym">Bdh</name>
</gene>
<sequence length="343" mass="38202">MLAARLSRPLSQLPGKALSVCDRENGTRHTLLFYPASFSPDTRRTYTSQADAASGKAVLVTGCDSGFGFSLAKHLHSKGFLVFAGCLLKDKGDAGVRELDSLKSDRLRTIQLNVCNSEEVEKAVETVRSGLKDPEKGMWGLVNNAGISTFGEVEFTSMETYKEVAEVNLWGTVRTTKSFLPLLRRAKGRVVNISSMLGRMANPARSPYCITKFGVEAFSDCLRYEMHPLGVKVSVVEPGNFIAATSLYSPERIQAIAKKMWDELPEVVRKDYGKKYFDEKIAKMETYCNSGSTDTSSVINAVTHALTAATPYTRYHPMDYYWWLRMQVMTHFPGAISDKIYIH</sequence>
<name>BDH_RAT</name>